<dbReference type="EC" id="3.2.1.1"/>
<dbReference type="EC" id="3.2.1.41"/>
<dbReference type="EMBL" id="M28471">
    <property type="protein sequence ID" value="AAA23205.1"/>
    <property type="molecule type" value="Genomic_DNA"/>
</dbReference>
<dbReference type="PIR" id="A44765">
    <property type="entry name" value="A44765"/>
</dbReference>
<dbReference type="SMR" id="P16950"/>
<dbReference type="CAZy" id="CBM20">
    <property type="family name" value="Carbohydrate-Binding Module Family 20"/>
</dbReference>
<dbReference type="CAZy" id="CBM34">
    <property type="family name" value="Carbohydrate-Binding Module Family 34"/>
</dbReference>
<dbReference type="CAZy" id="GH13">
    <property type="family name" value="Glycoside Hydrolase Family 13"/>
</dbReference>
<dbReference type="GO" id="GO:0004556">
    <property type="term" value="F:alpha-amylase activity"/>
    <property type="evidence" value="ECO:0007669"/>
    <property type="project" value="UniProtKB-EC"/>
</dbReference>
<dbReference type="GO" id="GO:0046872">
    <property type="term" value="F:metal ion binding"/>
    <property type="evidence" value="ECO:0007669"/>
    <property type="project" value="UniProtKB-KW"/>
</dbReference>
<dbReference type="GO" id="GO:0051060">
    <property type="term" value="F:pullulanase activity"/>
    <property type="evidence" value="ECO:0007669"/>
    <property type="project" value="UniProtKB-EC"/>
</dbReference>
<dbReference type="GO" id="GO:2001070">
    <property type="term" value="F:starch binding"/>
    <property type="evidence" value="ECO:0007669"/>
    <property type="project" value="InterPro"/>
</dbReference>
<dbReference type="GO" id="GO:0005975">
    <property type="term" value="P:carbohydrate metabolic process"/>
    <property type="evidence" value="ECO:0007669"/>
    <property type="project" value="InterPro"/>
</dbReference>
<dbReference type="CDD" id="cd11338">
    <property type="entry name" value="AmyAc_CMD"/>
    <property type="match status" value="1"/>
</dbReference>
<dbReference type="CDD" id="cd02857">
    <property type="entry name" value="E_set_CDase_PDE_N"/>
    <property type="match status" value="1"/>
</dbReference>
<dbReference type="CDD" id="cd00063">
    <property type="entry name" value="FN3"/>
    <property type="match status" value="1"/>
</dbReference>
<dbReference type="CDD" id="cd12962">
    <property type="entry name" value="X25_BaPul_like"/>
    <property type="match status" value="2"/>
</dbReference>
<dbReference type="Gene3D" id="3.20.20.80">
    <property type="entry name" value="Glycosidases"/>
    <property type="match status" value="1"/>
</dbReference>
<dbReference type="Gene3D" id="2.60.40.1180">
    <property type="entry name" value="Golgi alpha-mannosidase II"/>
    <property type="match status" value="1"/>
</dbReference>
<dbReference type="Gene3D" id="2.60.40.10">
    <property type="entry name" value="Immunoglobulins"/>
    <property type="match status" value="7"/>
</dbReference>
<dbReference type="InterPro" id="IPR031319">
    <property type="entry name" value="A-amylase_C"/>
</dbReference>
<dbReference type="InterPro" id="IPR013784">
    <property type="entry name" value="Carb-bd-like_fold"/>
</dbReference>
<dbReference type="InterPro" id="IPR002044">
    <property type="entry name" value="CBM20"/>
</dbReference>
<dbReference type="InterPro" id="IPR003961">
    <property type="entry name" value="FN3_dom"/>
</dbReference>
<dbReference type="InterPro" id="IPR036116">
    <property type="entry name" value="FN3_sf"/>
</dbReference>
<dbReference type="InterPro" id="IPR006047">
    <property type="entry name" value="Glyco_hydro_13_cat_dom"/>
</dbReference>
<dbReference type="InterPro" id="IPR004185">
    <property type="entry name" value="Glyco_hydro_13_lg-like_dom"/>
</dbReference>
<dbReference type="InterPro" id="IPR013780">
    <property type="entry name" value="Glyco_hydro_b"/>
</dbReference>
<dbReference type="InterPro" id="IPR017853">
    <property type="entry name" value="Glycoside_hydrolase_SF"/>
</dbReference>
<dbReference type="InterPro" id="IPR013783">
    <property type="entry name" value="Ig-like_fold"/>
</dbReference>
<dbReference type="InterPro" id="IPR014756">
    <property type="entry name" value="Ig_E-set"/>
</dbReference>
<dbReference type="InterPro" id="IPR054409">
    <property type="entry name" value="X25_BaPul-like"/>
</dbReference>
<dbReference type="PANTHER" id="PTHR10357">
    <property type="entry name" value="ALPHA-AMYLASE FAMILY MEMBER"/>
    <property type="match status" value="1"/>
</dbReference>
<dbReference type="PANTHER" id="PTHR10357:SF210">
    <property type="entry name" value="MALTODEXTRIN GLUCOSIDASE"/>
    <property type="match status" value="1"/>
</dbReference>
<dbReference type="Pfam" id="PF00128">
    <property type="entry name" value="Alpha-amylase"/>
    <property type="match status" value="1"/>
</dbReference>
<dbReference type="Pfam" id="PF02903">
    <property type="entry name" value="Alpha-amylase_N"/>
    <property type="match status" value="1"/>
</dbReference>
<dbReference type="Pfam" id="PF00686">
    <property type="entry name" value="CBM_20"/>
    <property type="match status" value="1"/>
</dbReference>
<dbReference type="Pfam" id="PF22058">
    <property type="entry name" value="X25_BaPul_like"/>
    <property type="match status" value="2"/>
</dbReference>
<dbReference type="SMART" id="SM00642">
    <property type="entry name" value="Aamy"/>
    <property type="match status" value="1"/>
</dbReference>
<dbReference type="SMART" id="SM00632">
    <property type="entry name" value="Aamy_C"/>
    <property type="match status" value="1"/>
</dbReference>
<dbReference type="SMART" id="SM01065">
    <property type="entry name" value="CBM_2"/>
    <property type="match status" value="1"/>
</dbReference>
<dbReference type="SMART" id="SM00060">
    <property type="entry name" value="FN3"/>
    <property type="match status" value="2"/>
</dbReference>
<dbReference type="SUPFAM" id="SSF51445">
    <property type="entry name" value="(Trans)glycosidases"/>
    <property type="match status" value="1"/>
</dbReference>
<dbReference type="SUPFAM" id="SSF81296">
    <property type="entry name" value="E set domains"/>
    <property type="match status" value="1"/>
</dbReference>
<dbReference type="SUPFAM" id="SSF49265">
    <property type="entry name" value="Fibronectin type III"/>
    <property type="match status" value="1"/>
</dbReference>
<dbReference type="SUPFAM" id="SSF51011">
    <property type="entry name" value="Glycosyl hydrolase domain"/>
    <property type="match status" value="1"/>
</dbReference>
<dbReference type="SUPFAM" id="SSF49452">
    <property type="entry name" value="Starch-binding domain-like"/>
    <property type="match status" value="1"/>
</dbReference>
<dbReference type="PROSITE" id="PS51166">
    <property type="entry name" value="CBM20"/>
    <property type="match status" value="1"/>
</dbReference>
<dbReference type="PROSITE" id="PS50853">
    <property type="entry name" value="FN3"/>
    <property type="match status" value="2"/>
</dbReference>
<gene>
    <name type="primary">apu</name>
</gene>
<organism>
    <name type="scientific">Thermoanaerobacter thermohydrosulfuricus</name>
    <name type="common">Clostridium thermohydrosulfuricum</name>
    <dbReference type="NCBI Taxonomy" id="1516"/>
    <lineage>
        <taxon>Bacteria</taxon>
        <taxon>Bacillati</taxon>
        <taxon>Bacillota</taxon>
        <taxon>Clostridia</taxon>
        <taxon>Thermoanaerobacterales</taxon>
        <taxon>Thermoanaerobacteraceae</taxon>
        <taxon>Thermoanaerobacter</taxon>
    </lineage>
</organism>
<name>APU_THETY</name>
<evidence type="ECO:0000250" key="1"/>
<evidence type="ECO:0000250" key="2">
    <source>
        <dbReference type="UniProtKB" id="P38940"/>
    </source>
</evidence>
<evidence type="ECO:0000250" key="3">
    <source>
        <dbReference type="UniProtKB" id="Q60053"/>
    </source>
</evidence>
<evidence type="ECO:0000255" key="4">
    <source>
        <dbReference type="PROSITE-ProRule" id="PRU00316"/>
    </source>
</evidence>
<evidence type="ECO:0000255" key="5">
    <source>
        <dbReference type="PROSITE-ProRule" id="PRU00594"/>
    </source>
</evidence>
<evidence type="ECO:0000269" key="6">
    <source>
    </source>
</evidence>
<evidence type="ECO:0000305" key="7"/>
<accession>P16950</accession>
<proteinExistence type="evidence at protein level"/>
<sequence>MFKRRALGFLLAFLLVFTAVFGSMPMEFAKAETDTAPAIANVVGNFQSKLGDSDWNINSDKTIMTYKGNGFYEFTTPVALPAGDYEYKVALNHSWEGGGVPSQGNLSFHLDSDSVVTFYYNYNTSSITDSTKYTPIPEDKLPRLVGTIQPAIGAGDDWKPETSTAIMRDYKFNNVYEYTANVPKGNYEFKVTLGPSWDINYGLNGEQNGPNIPLNVAYDTKITFYYDSVSHNIWTDYNPPLTGPDNNIYYDDLRHDTHDPFFRSPFGAIKTGDTVTLRIQAKNHDIESAKISYWDDIKKTRIEVPMYRIGQSPDGKYEYWEVKLSFDHPTRIWYYFILKDGTKTAYYGDNDEQLGGVGKATDTENKDFELTVYDKNLDTPDWMKGSVMYQIFPDRFFNGDSSNDHLKKYSRGFDPVEYHSNWYELPDNPNDKNKLGYTGDGIWSNDFFGGDLKGIDDKLDYLKSLGISVIYLNPIFQSPSNHRYDTTDYTKIDELLGDLSTFKKLMEDAHAKGIKVILDGVFNHTSDDSIYFDRYGKYLNTGVLGAYQAWKQGDQSKSPYGDWYEIKPDGTYEGWWGFDSLPVIRQINGSEYNVKSWADFIINNPNAISKYWLNPDGDKNVGADGWRLDVANEVAHDFWVHFRGAINTVKPNAPMVAENWNDASLDLLGDSFNSVMNYLFRNAVIDFILDKSFDDGNVVHNPIDAAKLDQRLMSIYERYPLPVFYSTMNLLGSHDTMRILTVFGYNSADENQNSQAAKDLAVKRLKLAAILQMGYPGMPSIYYGDEAGQSGGKDPDNRRTFPWGREDTDLQTFFKKVVNIRNENQVLKTGDLETLYANGDVYAFGRRIINGKDTFGKSYPDSVAIVVINKGDAKQVSIDTTKFIRDGVAFTDALSGKTYTVQDGKIVVEVGSMDGAILISDTGQNLTAPQPITDLKAVSGNGKVDLSWSVVDKAVSYNIYRSTVKGGLYEKIASNVTQITYTDTEVTNGLKYVYAVTAVDNDGNESALSNEVEAYPAFPIGWAGNMNQVNTHVIGVNNPVEVYAEVWAQGLTDKPGQGENMIAQLGYRYIGDTVGDAVYNAVYNKVEGVEISKDWTWVDAQYVGDSGNNDKYMAKFVPDMVGTWEYIMRFSSNQGHDWTYTKGPDGKTDEAKQFTVVPSNDVETPTAPVLQQPGIESSRVTLNWSPSADDVAIFGYEIYKSSSETGPFIKIATVSDSVYNYVDTDVVNGNVYYYKVVAVDTSYNRTASNTVKATPDIIPIKVTFNVTIPDYTPDDGVNIAGNFPDAFWNPNANQMTKAGSNTYSITLTLNEGTQIEYKYARGSWDKVEKGEYGNEIDNRKITVVNQGSNTMVVNDTVQRWRDVPIYIYSPKDKTIVDANTSEIEIKGNTYKGAKVTINDESFVQQENGVFTKVVPLEYGVNTIKIHVEPSGDKNNELTKDITITVTREKPARRQNLLLLHQQKQQNHLKKYHKAK</sequence>
<keyword id="KW-0106">Calcium</keyword>
<keyword id="KW-0119">Carbohydrate metabolism</keyword>
<keyword id="KW-0903">Direct protein sequencing</keyword>
<keyword id="KW-0326">Glycosidase</keyword>
<keyword id="KW-0378">Hydrolase</keyword>
<keyword id="KW-0479">Metal-binding</keyword>
<keyword id="KW-0677">Repeat</keyword>
<keyword id="KW-0732">Signal</keyword>
<comment type="catalytic activity">
    <reaction>
        <text>Endohydrolysis of (1-&gt;4)-alpha-D-glucosidic linkages in polysaccharides containing three or more (1-&gt;4)-alpha-linked D-glucose units.</text>
        <dbReference type="EC" id="3.2.1.1"/>
    </reaction>
</comment>
<comment type="catalytic activity">
    <reaction>
        <text>Hydrolysis of (1-&gt;6)-alpha-D-glucosidic linkages in pullulan, amylopectin and glycogen, and in the alpha- and beta-limit dextrins of amylopectin and glycogen.</text>
        <dbReference type="EC" id="3.2.1.41"/>
    </reaction>
</comment>
<comment type="cofactor">
    <cofactor evidence="3">
        <name>Ca(2+)</name>
        <dbReference type="ChEBI" id="CHEBI:29108"/>
    </cofactor>
</comment>
<comment type="similarity">
    <text evidence="7">Belongs to the glycosyl hydrolase 13 family.</text>
</comment>
<protein>
    <recommendedName>
        <fullName>Amylopullulanase</fullName>
    </recommendedName>
    <alternativeName>
        <fullName>Alpha-amylase/pullulanase</fullName>
    </alternativeName>
    <domain>
        <recommendedName>
            <fullName>Alpha-amylase</fullName>
            <ecNumber>3.2.1.1</ecNumber>
        </recommendedName>
        <alternativeName>
            <fullName>1,4-alpha-D-glucan glucanohydrolase</fullName>
        </alternativeName>
    </domain>
    <domain>
        <recommendedName>
            <fullName>Pullulanase</fullName>
            <ecNumber>3.2.1.41</ecNumber>
        </recommendedName>
        <alternativeName>
            <fullName>1,4-alpha-D-glucan glucanohydrolase</fullName>
        </alternativeName>
        <alternativeName>
            <fullName>Alpha-dextrin endo-1,6-alpha-glucosidase</fullName>
        </alternativeName>
    </domain>
</protein>
<feature type="signal peptide" evidence="6">
    <location>
        <begin position="1"/>
        <end position="31"/>
    </location>
</feature>
<feature type="chain" id="PRO_0000001323" description="Amylopullulanase">
    <location>
        <begin position="32"/>
        <end position="1475"/>
    </location>
</feature>
<feature type="domain" description="Fibronectin type-III 1" evidence="4">
    <location>
        <begin position="928"/>
        <end position="1019"/>
    </location>
</feature>
<feature type="domain" description="Fibronectin type-III 2" evidence="4">
    <location>
        <begin position="1164"/>
        <end position="1257"/>
    </location>
</feature>
<feature type="domain" description="CBM20" evidence="5">
    <location>
        <begin position="1255"/>
        <end position="1362"/>
    </location>
</feature>
<feature type="active site" description="Nucleophile" evidence="3">
    <location>
        <position position="629"/>
    </location>
</feature>
<feature type="active site" description="Proton donor" evidence="3">
    <location>
        <position position="658"/>
    </location>
</feature>
<feature type="binding site" evidence="3">
    <location>
        <position position="245"/>
    </location>
    <ligand>
        <name>Ca(2+)</name>
        <dbReference type="ChEBI" id="CHEBI:29108"/>
        <label>1</label>
    </ligand>
</feature>
<feature type="binding site" evidence="3">
    <location>
        <position position="247"/>
    </location>
    <ligand>
        <name>Ca(2+)</name>
        <dbReference type="ChEBI" id="CHEBI:29108"/>
        <label>1</label>
    </ligand>
</feature>
<feature type="binding site" evidence="3">
    <location>
        <position position="285"/>
    </location>
    <ligand>
        <name>Ca(2+)</name>
        <dbReference type="ChEBI" id="CHEBI:29108"/>
        <label>1</label>
    </ligand>
</feature>
<feature type="binding site" evidence="3">
    <location>
        <position position="340"/>
    </location>
    <ligand>
        <name>Ca(2+)</name>
        <dbReference type="ChEBI" id="CHEBI:29108"/>
        <label>1</label>
    </ligand>
</feature>
<feature type="binding site" evidence="3">
    <location>
        <position position="398"/>
    </location>
    <ligand>
        <name>Ca(2+)</name>
        <dbReference type="ChEBI" id="CHEBI:29108"/>
        <label>2</label>
    </ligand>
</feature>
<feature type="binding site" evidence="3">
    <location>
        <position position="400"/>
    </location>
    <ligand>
        <name>Ca(2+)</name>
        <dbReference type="ChEBI" id="CHEBI:29108"/>
        <label>2</label>
    </ligand>
</feature>
<feature type="binding site" evidence="3">
    <location>
        <position position="403"/>
    </location>
    <ligand>
        <name>Ca(2+)</name>
        <dbReference type="ChEBI" id="CHEBI:29108"/>
        <label>2</label>
    </ligand>
</feature>
<feature type="binding site" evidence="3">
    <location>
        <position position="404"/>
    </location>
    <ligand>
        <name>Ca(2+)</name>
        <dbReference type="ChEBI" id="CHEBI:29108"/>
        <label>2</label>
    </ligand>
</feature>
<feature type="binding site" evidence="3">
    <location>
        <position position="449"/>
    </location>
    <ligand>
        <name>Ca(2+)</name>
        <dbReference type="ChEBI" id="CHEBI:29108"/>
        <label>2</label>
    </ligand>
</feature>
<feature type="binding site" evidence="3">
    <location>
        <position position="451"/>
    </location>
    <ligand>
        <name>Ca(2+)</name>
        <dbReference type="ChEBI" id="CHEBI:29108"/>
        <label>2</label>
    </ligand>
</feature>
<feature type="binding site" evidence="2">
    <location>
        <position position="524"/>
    </location>
    <ligand>
        <name>substrate</name>
    </ligand>
</feature>
<feature type="binding site" evidence="2">
    <location>
        <position position="627"/>
    </location>
    <ligand>
        <name>substrate</name>
    </ligand>
</feature>
<feature type="binding site" evidence="2">
    <location>
        <begin position="734"/>
        <end position="735"/>
    </location>
    <ligand>
        <name>substrate</name>
    </ligand>
</feature>
<feature type="binding site" evidence="2">
    <location>
        <position position="794"/>
    </location>
    <ligand>
        <name>substrate</name>
    </ligand>
</feature>
<feature type="binding site" evidence="2">
    <location>
        <position position="798"/>
    </location>
    <ligand>
        <name>substrate</name>
    </ligand>
</feature>
<feature type="site" description="Transition state stabilizer" evidence="1">
    <location>
        <position position="735"/>
    </location>
</feature>
<reference key="1">
    <citation type="journal article" date="1990" name="J. Gen. Microbiol.">
        <title>Nucleotide sequence of the alpha-amylase-pullulanase gene from Clostridium thermohydrosulfuricum.</title>
        <authorList>
            <person name="Melasniemi H."/>
            <person name="Paloheimo M."/>
            <person name="Hemioe L."/>
        </authorList>
    </citation>
    <scope>NUCLEOTIDE SEQUENCE [GENOMIC DNA]</scope>
    <source>
        <strain>E101-69</strain>
    </source>
</reference>
<reference key="2">
    <citation type="journal article" date="1988" name="Biochem. J.">
        <title>Purification and some properties of the extracellular alpha-amylase-pullulanase produced by Clostridium thermohydrosulfuricum.</title>
        <authorList>
            <person name="Melasniemi H."/>
        </authorList>
    </citation>
    <scope>PROTEIN SEQUENCE OF 32-39</scope>
    <source>
        <strain>E101-69</strain>
    </source>
</reference>
<reference key="3">
    <citation type="journal article" date="1992" name="Proc. Natl. Acad. Sci. U.S.A.">
        <title>Proposed acquisition of an animal protein domain by bacteria.</title>
        <authorList>
            <person name="Bork P."/>
            <person name="Doolittle R.F."/>
        </authorList>
    </citation>
    <scope>DOMAINS FIBRONECTIN TYPE-III</scope>
</reference>